<protein>
    <recommendedName>
        <fullName evidence="1">Small ribosomal subunit protein uS13</fullName>
    </recommendedName>
    <alternativeName>
        <fullName evidence="2">30S ribosomal protein S13</fullName>
    </alternativeName>
</protein>
<sequence>MARIAGVNIPTNKRVAISLRYIYGIGPAQAQKICTELSIPDERRVNQLSDDEILRIRELIDREYRVEGDLRREVAMNIKRLMDLGCYRGLRHRRGLPVRGQRTHTNARTRKGKAVAIAGKKKVTR</sequence>
<accession>Q0BUM8</accession>
<proteinExistence type="inferred from homology"/>
<gene>
    <name evidence="1" type="primary">rpsM</name>
    <name type="ordered locus">GbCGDNIH1_0576</name>
</gene>
<reference key="1">
    <citation type="journal article" date="2007" name="J. Bacteriol.">
        <title>Genome sequence analysis of the emerging human pathogenic acetic acid bacterium Granulibacter bethesdensis.</title>
        <authorList>
            <person name="Greenberg D.E."/>
            <person name="Porcella S.F."/>
            <person name="Zelazny A.M."/>
            <person name="Virtaneva K."/>
            <person name="Sturdevant D.E."/>
            <person name="Kupko J.J. III"/>
            <person name="Barbian K.D."/>
            <person name="Babar A."/>
            <person name="Dorward D.W."/>
            <person name="Holland S.M."/>
        </authorList>
    </citation>
    <scope>NUCLEOTIDE SEQUENCE [LARGE SCALE GENOMIC DNA]</scope>
    <source>
        <strain>ATCC BAA-1260 / CGDNIH1</strain>
    </source>
</reference>
<evidence type="ECO:0000255" key="1">
    <source>
        <dbReference type="HAMAP-Rule" id="MF_01315"/>
    </source>
</evidence>
<evidence type="ECO:0000305" key="2"/>
<feature type="chain" id="PRO_0000306613" description="Small ribosomal subunit protein uS13">
    <location>
        <begin position="1"/>
        <end position="125"/>
    </location>
</feature>
<organism>
    <name type="scientific">Granulibacter bethesdensis (strain ATCC BAA-1260 / CGDNIH1)</name>
    <dbReference type="NCBI Taxonomy" id="391165"/>
    <lineage>
        <taxon>Bacteria</taxon>
        <taxon>Pseudomonadati</taxon>
        <taxon>Pseudomonadota</taxon>
        <taxon>Alphaproteobacteria</taxon>
        <taxon>Acetobacterales</taxon>
        <taxon>Acetobacteraceae</taxon>
        <taxon>Granulibacter</taxon>
    </lineage>
</organism>
<name>RS13_GRABC</name>
<dbReference type="EMBL" id="CP000394">
    <property type="protein sequence ID" value="ABI61474.1"/>
    <property type="status" value="ALT_INIT"/>
    <property type="molecule type" value="Genomic_DNA"/>
</dbReference>
<dbReference type="RefSeq" id="WP_011631283.1">
    <property type="nucleotide sequence ID" value="NC_008343.2"/>
</dbReference>
<dbReference type="SMR" id="Q0BUM8"/>
<dbReference type="STRING" id="391165.GbCGDNIH1_0576"/>
<dbReference type="GeneID" id="69744829"/>
<dbReference type="KEGG" id="gbe:GbCGDNIH1_0576"/>
<dbReference type="eggNOG" id="COG0099">
    <property type="taxonomic scope" value="Bacteria"/>
</dbReference>
<dbReference type="HOGENOM" id="CLU_103849_1_2_5"/>
<dbReference type="OrthoDB" id="9803610at2"/>
<dbReference type="Proteomes" id="UP000001963">
    <property type="component" value="Chromosome"/>
</dbReference>
<dbReference type="GO" id="GO:0005829">
    <property type="term" value="C:cytosol"/>
    <property type="evidence" value="ECO:0007669"/>
    <property type="project" value="TreeGrafter"/>
</dbReference>
<dbReference type="GO" id="GO:0015935">
    <property type="term" value="C:small ribosomal subunit"/>
    <property type="evidence" value="ECO:0007669"/>
    <property type="project" value="TreeGrafter"/>
</dbReference>
<dbReference type="GO" id="GO:0019843">
    <property type="term" value="F:rRNA binding"/>
    <property type="evidence" value="ECO:0007669"/>
    <property type="project" value="UniProtKB-UniRule"/>
</dbReference>
<dbReference type="GO" id="GO:0003735">
    <property type="term" value="F:structural constituent of ribosome"/>
    <property type="evidence" value="ECO:0007669"/>
    <property type="project" value="InterPro"/>
</dbReference>
<dbReference type="GO" id="GO:0000049">
    <property type="term" value="F:tRNA binding"/>
    <property type="evidence" value="ECO:0007669"/>
    <property type="project" value="UniProtKB-UniRule"/>
</dbReference>
<dbReference type="GO" id="GO:0006412">
    <property type="term" value="P:translation"/>
    <property type="evidence" value="ECO:0007669"/>
    <property type="project" value="UniProtKB-UniRule"/>
</dbReference>
<dbReference type="FunFam" id="1.10.8.50:FF:000001">
    <property type="entry name" value="30S ribosomal protein S13"/>
    <property type="match status" value="1"/>
</dbReference>
<dbReference type="FunFam" id="4.10.910.10:FF:000001">
    <property type="entry name" value="30S ribosomal protein S13"/>
    <property type="match status" value="1"/>
</dbReference>
<dbReference type="Gene3D" id="1.10.8.50">
    <property type="match status" value="1"/>
</dbReference>
<dbReference type="Gene3D" id="4.10.910.10">
    <property type="entry name" value="30s ribosomal protein s13, domain 2"/>
    <property type="match status" value="1"/>
</dbReference>
<dbReference type="HAMAP" id="MF_01315">
    <property type="entry name" value="Ribosomal_uS13"/>
    <property type="match status" value="1"/>
</dbReference>
<dbReference type="InterPro" id="IPR027437">
    <property type="entry name" value="Rbsml_uS13_C"/>
</dbReference>
<dbReference type="InterPro" id="IPR001892">
    <property type="entry name" value="Ribosomal_uS13"/>
</dbReference>
<dbReference type="InterPro" id="IPR010979">
    <property type="entry name" value="Ribosomal_uS13-like_H2TH"/>
</dbReference>
<dbReference type="InterPro" id="IPR019980">
    <property type="entry name" value="Ribosomal_uS13_bac-type"/>
</dbReference>
<dbReference type="InterPro" id="IPR018269">
    <property type="entry name" value="Ribosomal_uS13_CS"/>
</dbReference>
<dbReference type="NCBIfam" id="TIGR03631">
    <property type="entry name" value="uS13_bact"/>
    <property type="match status" value="1"/>
</dbReference>
<dbReference type="PANTHER" id="PTHR10871">
    <property type="entry name" value="30S RIBOSOMAL PROTEIN S13/40S RIBOSOMAL PROTEIN S18"/>
    <property type="match status" value="1"/>
</dbReference>
<dbReference type="PANTHER" id="PTHR10871:SF1">
    <property type="entry name" value="SMALL RIBOSOMAL SUBUNIT PROTEIN US13M"/>
    <property type="match status" value="1"/>
</dbReference>
<dbReference type="Pfam" id="PF00416">
    <property type="entry name" value="Ribosomal_S13"/>
    <property type="match status" value="1"/>
</dbReference>
<dbReference type="PIRSF" id="PIRSF002134">
    <property type="entry name" value="Ribosomal_S13"/>
    <property type="match status" value="1"/>
</dbReference>
<dbReference type="SUPFAM" id="SSF46946">
    <property type="entry name" value="S13-like H2TH domain"/>
    <property type="match status" value="1"/>
</dbReference>
<dbReference type="PROSITE" id="PS00646">
    <property type="entry name" value="RIBOSOMAL_S13_1"/>
    <property type="match status" value="1"/>
</dbReference>
<dbReference type="PROSITE" id="PS50159">
    <property type="entry name" value="RIBOSOMAL_S13_2"/>
    <property type="match status" value="1"/>
</dbReference>
<keyword id="KW-1185">Reference proteome</keyword>
<keyword id="KW-0687">Ribonucleoprotein</keyword>
<keyword id="KW-0689">Ribosomal protein</keyword>
<keyword id="KW-0694">RNA-binding</keyword>
<keyword id="KW-0699">rRNA-binding</keyword>
<keyword id="KW-0820">tRNA-binding</keyword>
<comment type="function">
    <text evidence="1">Located at the top of the head of the 30S subunit, it contacts several helices of the 16S rRNA. In the 70S ribosome it contacts the 23S rRNA (bridge B1a) and protein L5 of the 50S subunit (bridge B1b), connecting the 2 subunits; these bridges are implicated in subunit movement. Contacts the tRNAs in the A and P-sites.</text>
</comment>
<comment type="subunit">
    <text evidence="1">Part of the 30S ribosomal subunit. Forms a loose heterodimer with protein S19. Forms two bridges to the 50S subunit in the 70S ribosome.</text>
</comment>
<comment type="similarity">
    <text evidence="1">Belongs to the universal ribosomal protein uS13 family.</text>
</comment>
<comment type="sequence caution" evidence="2">
    <conflict type="erroneous initiation">
        <sequence resource="EMBL-CDS" id="ABI61474"/>
    </conflict>
</comment>